<reference key="1">
    <citation type="journal article" date="2005" name="Nature">
        <title>The map-based sequence of the rice genome.</title>
        <authorList>
            <consortium name="International rice genome sequencing project (IRGSP)"/>
        </authorList>
    </citation>
    <scope>NUCLEOTIDE SEQUENCE [LARGE SCALE GENOMIC DNA]</scope>
    <source>
        <strain>cv. Nipponbare</strain>
    </source>
</reference>
<reference key="2">
    <citation type="journal article" date="2008" name="Nucleic Acids Res.">
        <title>The rice annotation project database (RAP-DB): 2008 update.</title>
        <authorList>
            <consortium name="The rice annotation project (RAP)"/>
        </authorList>
    </citation>
    <scope>GENOME REANNOTATION</scope>
    <source>
        <strain>cv. Nipponbare</strain>
    </source>
</reference>
<reference key="3">
    <citation type="journal article" date="2013" name="Rice">
        <title>Improvement of the Oryza sativa Nipponbare reference genome using next generation sequence and optical map data.</title>
        <authorList>
            <person name="Kawahara Y."/>
            <person name="de la Bastide M."/>
            <person name="Hamilton J.P."/>
            <person name="Kanamori H."/>
            <person name="McCombie W.R."/>
            <person name="Ouyang S."/>
            <person name="Schwartz D.C."/>
            <person name="Tanaka T."/>
            <person name="Wu J."/>
            <person name="Zhou S."/>
            <person name="Childs K.L."/>
            <person name="Davidson R.M."/>
            <person name="Lin H."/>
            <person name="Quesada-Ocampo L."/>
            <person name="Vaillancourt B."/>
            <person name="Sakai H."/>
            <person name="Lee S.S."/>
            <person name="Kim J."/>
            <person name="Numa H."/>
            <person name="Itoh T."/>
            <person name="Buell C.R."/>
            <person name="Matsumoto T."/>
        </authorList>
    </citation>
    <scope>GENOME REANNOTATION</scope>
    <source>
        <strain>cv. Nipponbare</strain>
    </source>
</reference>
<reference key="4">
    <citation type="journal article" date="2005" name="PLoS Biol.">
        <title>The genomes of Oryza sativa: a history of duplications.</title>
        <authorList>
            <person name="Yu J."/>
            <person name="Wang J."/>
            <person name="Lin W."/>
            <person name="Li S."/>
            <person name="Li H."/>
            <person name="Zhou J."/>
            <person name="Ni P."/>
            <person name="Dong W."/>
            <person name="Hu S."/>
            <person name="Zeng C."/>
            <person name="Zhang J."/>
            <person name="Zhang Y."/>
            <person name="Li R."/>
            <person name="Xu Z."/>
            <person name="Li S."/>
            <person name="Li X."/>
            <person name="Zheng H."/>
            <person name="Cong L."/>
            <person name="Lin L."/>
            <person name="Yin J."/>
            <person name="Geng J."/>
            <person name="Li G."/>
            <person name="Shi J."/>
            <person name="Liu J."/>
            <person name="Lv H."/>
            <person name="Li J."/>
            <person name="Wang J."/>
            <person name="Deng Y."/>
            <person name="Ran L."/>
            <person name="Shi X."/>
            <person name="Wang X."/>
            <person name="Wu Q."/>
            <person name="Li C."/>
            <person name="Ren X."/>
            <person name="Wang J."/>
            <person name="Wang X."/>
            <person name="Li D."/>
            <person name="Liu D."/>
            <person name="Zhang X."/>
            <person name="Ji Z."/>
            <person name="Zhao W."/>
            <person name="Sun Y."/>
            <person name="Zhang Z."/>
            <person name="Bao J."/>
            <person name="Han Y."/>
            <person name="Dong L."/>
            <person name="Ji J."/>
            <person name="Chen P."/>
            <person name="Wu S."/>
            <person name="Liu J."/>
            <person name="Xiao Y."/>
            <person name="Bu D."/>
            <person name="Tan J."/>
            <person name="Yang L."/>
            <person name="Ye C."/>
            <person name="Zhang J."/>
            <person name="Xu J."/>
            <person name="Zhou Y."/>
            <person name="Yu Y."/>
            <person name="Zhang B."/>
            <person name="Zhuang S."/>
            <person name="Wei H."/>
            <person name="Liu B."/>
            <person name="Lei M."/>
            <person name="Yu H."/>
            <person name="Li Y."/>
            <person name="Xu H."/>
            <person name="Wei S."/>
            <person name="He X."/>
            <person name="Fang L."/>
            <person name="Zhang Z."/>
            <person name="Zhang Y."/>
            <person name="Huang X."/>
            <person name="Su Z."/>
            <person name="Tong W."/>
            <person name="Li J."/>
            <person name="Tong Z."/>
            <person name="Li S."/>
            <person name="Ye J."/>
            <person name="Wang L."/>
            <person name="Fang L."/>
            <person name="Lei T."/>
            <person name="Chen C.-S."/>
            <person name="Chen H.-C."/>
            <person name="Xu Z."/>
            <person name="Li H."/>
            <person name="Huang H."/>
            <person name="Zhang F."/>
            <person name="Xu H."/>
            <person name="Li N."/>
            <person name="Zhao C."/>
            <person name="Li S."/>
            <person name="Dong L."/>
            <person name="Huang Y."/>
            <person name="Li L."/>
            <person name="Xi Y."/>
            <person name="Qi Q."/>
            <person name="Li W."/>
            <person name="Zhang B."/>
            <person name="Hu W."/>
            <person name="Zhang Y."/>
            <person name="Tian X."/>
            <person name="Jiao Y."/>
            <person name="Liang X."/>
            <person name="Jin J."/>
            <person name="Gao L."/>
            <person name="Zheng W."/>
            <person name="Hao B."/>
            <person name="Liu S.-M."/>
            <person name="Wang W."/>
            <person name="Yuan L."/>
            <person name="Cao M."/>
            <person name="McDermott J."/>
            <person name="Samudrala R."/>
            <person name="Wang J."/>
            <person name="Wong G.K.-S."/>
            <person name="Yang H."/>
        </authorList>
    </citation>
    <scope>NUCLEOTIDE SEQUENCE [LARGE SCALE GENOMIC DNA]</scope>
    <source>
        <strain>cv. Nipponbare</strain>
    </source>
</reference>
<reference key="5">
    <citation type="journal article" date="2003" name="Science">
        <title>Collection, mapping, and annotation of over 28,000 cDNA clones from japonica rice.</title>
        <authorList>
            <consortium name="The rice full-length cDNA consortium"/>
        </authorList>
    </citation>
    <scope>NUCLEOTIDE SEQUENCE [LARGE SCALE MRNA]</scope>
    <source>
        <strain>cv. Nipponbare</strain>
    </source>
</reference>
<reference key="6">
    <citation type="journal article" date="2008" name="BMC Genomics">
        <title>Genome-wide and expression analysis of protein phosphatase 2C in rice and Arabidopsis.</title>
        <authorList>
            <person name="Xue T."/>
            <person name="Wang D."/>
            <person name="Zhang S."/>
            <person name="Ehlting J."/>
            <person name="Ni F."/>
            <person name="Jacab S."/>
            <person name="Zheng C."/>
            <person name="Zhong Y."/>
        </authorList>
    </citation>
    <scope>GENE FAMILY</scope>
    <scope>NOMENCLATURE</scope>
</reference>
<sequence>MCVEESEGAERLDFGEPAAAAADAGKSKSKSPDELPSPRMERVCENTTAADFKQNKSGNFVPNIRSGDWSDIGGRQYMEDTHVCITDLAKNFGYQSVDNEAISFYGVFDGHGGKDAAHFVRDNLPRIIVEDADFPLELEKVVRRSFVHADNQFAKTTLSSGTTALTAMIFGRTLLIANAGDCRAVLSRCGTAIEMSVDHRPCSLSEKLRVESLGGYVDDGYLNGLLGVTRALGDWHLEGMKEAGNPGGPLSAEPELKMITLTKDDEFLIIGSDGIWDVFSNQNVVDFARRRLQEHNDVKSCCREIVEEAIKRGATDNLTAVLVSFHLEAPPQVRVSRPGRVARSISAEGLNSLRTLLRNQ</sequence>
<evidence type="ECO:0000250" key="1"/>
<evidence type="ECO:0000255" key="2">
    <source>
        <dbReference type="PROSITE-ProRule" id="PRU01082"/>
    </source>
</evidence>
<evidence type="ECO:0000256" key="3">
    <source>
        <dbReference type="SAM" id="MobiDB-lite"/>
    </source>
</evidence>
<evidence type="ECO:0000305" key="4"/>
<evidence type="ECO:0000312" key="5">
    <source>
        <dbReference type="EMBL" id="EEE65204.1"/>
    </source>
</evidence>
<dbReference type="EC" id="3.1.3.16"/>
<dbReference type="EMBL" id="AP003019">
    <property type="protein sequence ID" value="BAD72302.1"/>
    <property type="molecule type" value="Genomic_DNA"/>
</dbReference>
<dbReference type="EMBL" id="AP007257">
    <property type="protein sequence ID" value="BAD72550.1"/>
    <property type="molecule type" value="Genomic_DNA"/>
</dbReference>
<dbReference type="EMBL" id="AP008212">
    <property type="protein sequence ID" value="BAF18885.1"/>
    <property type="molecule type" value="Genomic_DNA"/>
</dbReference>
<dbReference type="EMBL" id="AP014962">
    <property type="protein sequence ID" value="BAS96452.1"/>
    <property type="molecule type" value="Genomic_DNA"/>
</dbReference>
<dbReference type="EMBL" id="CM000143">
    <property type="protein sequence ID" value="EEE65204.1"/>
    <property type="molecule type" value="Genomic_DNA"/>
</dbReference>
<dbReference type="EMBL" id="AK065602">
    <property type="protein sequence ID" value="BAG89581.1"/>
    <property type="molecule type" value="mRNA"/>
</dbReference>
<dbReference type="RefSeq" id="XP_015643386.1">
    <property type="nucleotide sequence ID" value="XM_015787900.1"/>
</dbReference>
<dbReference type="SMR" id="Q5SMK6"/>
<dbReference type="FunCoup" id="Q5SMK6">
    <property type="interactions" value="4"/>
</dbReference>
<dbReference type="STRING" id="39947.Q5SMK6"/>
<dbReference type="PaxDb" id="39947-Q5SMK6"/>
<dbReference type="EnsemblPlants" id="Os06t0179700-01">
    <property type="protein sequence ID" value="Os06t0179700-01"/>
    <property type="gene ID" value="Os06g0179700"/>
</dbReference>
<dbReference type="Gramene" id="Os06t0179700-01">
    <property type="protein sequence ID" value="Os06t0179700-01"/>
    <property type="gene ID" value="Os06g0179700"/>
</dbReference>
<dbReference type="KEGG" id="dosa:Os06g0179700"/>
<dbReference type="eggNOG" id="KOG0698">
    <property type="taxonomic scope" value="Eukaryota"/>
</dbReference>
<dbReference type="HOGENOM" id="CLU_013173_21_1_1"/>
<dbReference type="InParanoid" id="Q5SMK6"/>
<dbReference type="OMA" id="HTQMENF"/>
<dbReference type="OrthoDB" id="10264738at2759"/>
<dbReference type="Proteomes" id="UP000000763">
    <property type="component" value="Chromosome 6"/>
</dbReference>
<dbReference type="Proteomes" id="UP000007752">
    <property type="component" value="Chromosome 6"/>
</dbReference>
<dbReference type="Proteomes" id="UP000059680">
    <property type="component" value="Chromosome 6"/>
</dbReference>
<dbReference type="GO" id="GO:0046872">
    <property type="term" value="F:metal ion binding"/>
    <property type="evidence" value="ECO:0007669"/>
    <property type="project" value="UniProtKB-KW"/>
</dbReference>
<dbReference type="GO" id="GO:0004722">
    <property type="term" value="F:protein serine/threonine phosphatase activity"/>
    <property type="evidence" value="ECO:0007669"/>
    <property type="project" value="UniProtKB-EC"/>
</dbReference>
<dbReference type="GO" id="GO:0007165">
    <property type="term" value="P:signal transduction"/>
    <property type="evidence" value="ECO:0000318"/>
    <property type="project" value="GO_Central"/>
</dbReference>
<dbReference type="CDD" id="cd00143">
    <property type="entry name" value="PP2Cc"/>
    <property type="match status" value="1"/>
</dbReference>
<dbReference type="FunFam" id="3.60.40.10:FF:000004">
    <property type="entry name" value="Probable protein phosphatase 2C 22"/>
    <property type="match status" value="1"/>
</dbReference>
<dbReference type="Gene3D" id="3.60.40.10">
    <property type="entry name" value="PPM-type phosphatase domain"/>
    <property type="match status" value="1"/>
</dbReference>
<dbReference type="InterPro" id="IPR015655">
    <property type="entry name" value="PP2C"/>
</dbReference>
<dbReference type="InterPro" id="IPR000222">
    <property type="entry name" value="PP2C_BS"/>
</dbReference>
<dbReference type="InterPro" id="IPR036457">
    <property type="entry name" value="PPM-type-like_dom_sf"/>
</dbReference>
<dbReference type="InterPro" id="IPR001932">
    <property type="entry name" value="PPM-type_phosphatase-like_dom"/>
</dbReference>
<dbReference type="PANTHER" id="PTHR13832">
    <property type="entry name" value="PROTEIN PHOSPHATASE 2C"/>
    <property type="match status" value="1"/>
</dbReference>
<dbReference type="PANTHER" id="PTHR13832:SF531">
    <property type="entry name" value="PROTEIN PHOSPHATASE 2C 54-RELATED"/>
    <property type="match status" value="1"/>
</dbReference>
<dbReference type="Pfam" id="PF00481">
    <property type="entry name" value="PP2C"/>
    <property type="match status" value="1"/>
</dbReference>
<dbReference type="SMART" id="SM00331">
    <property type="entry name" value="PP2C_SIG"/>
    <property type="match status" value="1"/>
</dbReference>
<dbReference type="SMART" id="SM00332">
    <property type="entry name" value="PP2Cc"/>
    <property type="match status" value="1"/>
</dbReference>
<dbReference type="SUPFAM" id="SSF81606">
    <property type="entry name" value="PP2C-like"/>
    <property type="match status" value="1"/>
</dbReference>
<dbReference type="PROSITE" id="PS01032">
    <property type="entry name" value="PPM_1"/>
    <property type="match status" value="1"/>
</dbReference>
<dbReference type="PROSITE" id="PS51746">
    <property type="entry name" value="PPM_2"/>
    <property type="match status" value="1"/>
</dbReference>
<comment type="catalytic activity">
    <reaction>
        <text>O-phospho-L-seryl-[protein] + H2O = L-seryl-[protein] + phosphate</text>
        <dbReference type="Rhea" id="RHEA:20629"/>
        <dbReference type="Rhea" id="RHEA-COMP:9863"/>
        <dbReference type="Rhea" id="RHEA-COMP:11604"/>
        <dbReference type="ChEBI" id="CHEBI:15377"/>
        <dbReference type="ChEBI" id="CHEBI:29999"/>
        <dbReference type="ChEBI" id="CHEBI:43474"/>
        <dbReference type="ChEBI" id="CHEBI:83421"/>
        <dbReference type="EC" id="3.1.3.16"/>
    </reaction>
</comment>
<comment type="catalytic activity">
    <reaction>
        <text>O-phospho-L-threonyl-[protein] + H2O = L-threonyl-[protein] + phosphate</text>
        <dbReference type="Rhea" id="RHEA:47004"/>
        <dbReference type="Rhea" id="RHEA-COMP:11060"/>
        <dbReference type="Rhea" id="RHEA-COMP:11605"/>
        <dbReference type="ChEBI" id="CHEBI:15377"/>
        <dbReference type="ChEBI" id="CHEBI:30013"/>
        <dbReference type="ChEBI" id="CHEBI:43474"/>
        <dbReference type="ChEBI" id="CHEBI:61977"/>
        <dbReference type="EC" id="3.1.3.16"/>
    </reaction>
</comment>
<comment type="cofactor">
    <cofactor evidence="1">
        <name>Mg(2+)</name>
        <dbReference type="ChEBI" id="CHEBI:18420"/>
    </cofactor>
    <cofactor evidence="1">
        <name>Mn(2+)</name>
        <dbReference type="ChEBI" id="CHEBI:29035"/>
    </cofactor>
    <text evidence="1">Binds 2 magnesium or manganese ions per subunit.</text>
</comment>
<comment type="similarity">
    <text evidence="4">Belongs to the PP2C family.</text>
</comment>
<feature type="chain" id="PRO_0000363301" description="Probable protein phosphatase 2C 54">
    <location>
        <begin position="1"/>
        <end position="360"/>
    </location>
</feature>
<feature type="domain" description="PPM-type phosphatase" evidence="2">
    <location>
        <begin position="65"/>
        <end position="325"/>
    </location>
</feature>
<feature type="region of interest" description="Disordered" evidence="3">
    <location>
        <begin position="1"/>
        <end position="39"/>
    </location>
</feature>
<feature type="binding site" evidence="1">
    <location>
        <position position="109"/>
    </location>
    <ligand>
        <name>Mn(2+)</name>
        <dbReference type="ChEBI" id="CHEBI:29035"/>
        <label>1</label>
    </ligand>
</feature>
<feature type="binding site" evidence="1">
    <location>
        <position position="109"/>
    </location>
    <ligand>
        <name>Mn(2+)</name>
        <dbReference type="ChEBI" id="CHEBI:29035"/>
        <label>2</label>
    </ligand>
</feature>
<feature type="binding site" evidence="1">
    <location>
        <position position="110"/>
    </location>
    <ligand>
        <name>Mn(2+)</name>
        <dbReference type="ChEBI" id="CHEBI:29035"/>
        <label>1</label>
    </ligand>
</feature>
<feature type="binding site" evidence="1">
    <location>
        <position position="273"/>
    </location>
    <ligand>
        <name>Mn(2+)</name>
        <dbReference type="ChEBI" id="CHEBI:29035"/>
        <label>2</label>
    </ligand>
</feature>
<feature type="binding site" evidence="1">
    <location>
        <position position="316"/>
    </location>
    <ligand>
        <name>Mn(2+)</name>
        <dbReference type="ChEBI" id="CHEBI:29035"/>
        <label>2</label>
    </ligand>
</feature>
<name>P2C54_ORYSJ</name>
<accession>Q5SMK6</accession>
<accession>B9FRU3</accession>
<proteinExistence type="evidence at transcript level"/>
<keyword id="KW-0378">Hydrolase</keyword>
<keyword id="KW-0460">Magnesium</keyword>
<keyword id="KW-0464">Manganese</keyword>
<keyword id="KW-0479">Metal-binding</keyword>
<keyword id="KW-0904">Protein phosphatase</keyword>
<keyword id="KW-1185">Reference proteome</keyword>
<protein>
    <recommendedName>
        <fullName>Probable protein phosphatase 2C 54</fullName>
        <shortName>OsPP2C54</shortName>
        <ecNumber>3.1.3.16</ecNumber>
    </recommendedName>
</protein>
<organism>
    <name type="scientific">Oryza sativa subsp. japonica</name>
    <name type="common">Rice</name>
    <dbReference type="NCBI Taxonomy" id="39947"/>
    <lineage>
        <taxon>Eukaryota</taxon>
        <taxon>Viridiplantae</taxon>
        <taxon>Streptophyta</taxon>
        <taxon>Embryophyta</taxon>
        <taxon>Tracheophyta</taxon>
        <taxon>Spermatophyta</taxon>
        <taxon>Magnoliopsida</taxon>
        <taxon>Liliopsida</taxon>
        <taxon>Poales</taxon>
        <taxon>Poaceae</taxon>
        <taxon>BOP clade</taxon>
        <taxon>Oryzoideae</taxon>
        <taxon>Oryzeae</taxon>
        <taxon>Oryzinae</taxon>
        <taxon>Oryza</taxon>
        <taxon>Oryza sativa</taxon>
    </lineage>
</organism>
<gene>
    <name type="ordered locus">Os06g0179700</name>
    <name type="ordered locus">LOC_Os06g08140</name>
    <name evidence="5" type="ORF">OsJ_20334</name>
    <name type="ORF">OSJNBa0035I03.20</name>
    <name type="ORF">OSJNBb0019L07.2</name>
</gene>